<comment type="function">
    <text evidence="1">Cell wall formation. Catalyzes the transfer of a GlcNAc subunit on undecaprenyl-pyrophosphoryl-MurNAc-pentapeptide (lipid intermediate I) to form undecaprenyl-pyrophosphoryl-MurNAc-(pentapeptide)GlcNAc (lipid intermediate II).</text>
</comment>
<comment type="catalytic activity">
    <reaction evidence="1">
        <text>di-trans,octa-cis-undecaprenyl diphospho-N-acetyl-alpha-D-muramoyl-L-alanyl-D-glutamyl-meso-2,6-diaminopimeloyl-D-alanyl-D-alanine + UDP-N-acetyl-alpha-D-glucosamine = di-trans,octa-cis-undecaprenyl diphospho-[N-acetyl-alpha-D-glucosaminyl-(1-&gt;4)]-N-acetyl-alpha-D-muramoyl-L-alanyl-D-glutamyl-meso-2,6-diaminopimeloyl-D-alanyl-D-alanine + UDP + H(+)</text>
        <dbReference type="Rhea" id="RHEA:31227"/>
        <dbReference type="ChEBI" id="CHEBI:15378"/>
        <dbReference type="ChEBI" id="CHEBI:57705"/>
        <dbReference type="ChEBI" id="CHEBI:58223"/>
        <dbReference type="ChEBI" id="CHEBI:61387"/>
        <dbReference type="ChEBI" id="CHEBI:61388"/>
        <dbReference type="EC" id="2.4.1.227"/>
    </reaction>
</comment>
<comment type="pathway">
    <text evidence="1">Cell wall biogenesis; peptidoglycan biosynthesis.</text>
</comment>
<comment type="subcellular location">
    <subcellularLocation>
        <location evidence="1">Cell inner membrane</location>
        <topology evidence="1">Peripheral membrane protein</topology>
        <orientation evidence="1">Cytoplasmic side</orientation>
    </subcellularLocation>
</comment>
<comment type="similarity">
    <text evidence="1">Belongs to the glycosyltransferase 28 family. MurG subfamily.</text>
</comment>
<feature type="chain" id="PRO_1000116478" description="UDP-N-acetylglucosamine--N-acetylmuramyl-(pentapeptide) pyrophosphoryl-undecaprenol N-acetylglucosamine transferase">
    <location>
        <begin position="1"/>
        <end position="355"/>
    </location>
</feature>
<feature type="binding site" evidence="1">
    <location>
        <begin position="15"/>
        <end position="17"/>
    </location>
    <ligand>
        <name>UDP-N-acetyl-alpha-D-glucosamine</name>
        <dbReference type="ChEBI" id="CHEBI:57705"/>
    </ligand>
</feature>
<feature type="binding site" evidence="1">
    <location>
        <position position="127"/>
    </location>
    <ligand>
        <name>UDP-N-acetyl-alpha-D-glucosamine</name>
        <dbReference type="ChEBI" id="CHEBI:57705"/>
    </ligand>
</feature>
<feature type="binding site" evidence="1">
    <location>
        <position position="163"/>
    </location>
    <ligand>
        <name>UDP-N-acetyl-alpha-D-glucosamine</name>
        <dbReference type="ChEBI" id="CHEBI:57705"/>
    </ligand>
</feature>
<feature type="binding site" evidence="1">
    <location>
        <position position="191"/>
    </location>
    <ligand>
        <name>UDP-N-acetyl-alpha-D-glucosamine</name>
        <dbReference type="ChEBI" id="CHEBI:57705"/>
    </ligand>
</feature>
<feature type="binding site" evidence="1">
    <location>
        <position position="244"/>
    </location>
    <ligand>
        <name>UDP-N-acetyl-alpha-D-glucosamine</name>
        <dbReference type="ChEBI" id="CHEBI:57705"/>
    </ligand>
</feature>
<feature type="binding site" evidence="1">
    <location>
        <begin position="263"/>
        <end position="268"/>
    </location>
    <ligand>
        <name>UDP-N-acetyl-alpha-D-glucosamine</name>
        <dbReference type="ChEBI" id="CHEBI:57705"/>
    </ligand>
</feature>
<feature type="binding site" evidence="1">
    <location>
        <position position="288"/>
    </location>
    <ligand>
        <name>UDP-N-acetyl-alpha-D-glucosamine</name>
        <dbReference type="ChEBI" id="CHEBI:57705"/>
    </ligand>
</feature>
<protein>
    <recommendedName>
        <fullName evidence="1">UDP-N-acetylglucosamine--N-acetylmuramyl-(pentapeptide) pyrophosphoryl-undecaprenol N-acetylglucosamine transferase</fullName>
        <ecNumber evidence="1">2.4.1.227</ecNumber>
    </recommendedName>
    <alternativeName>
        <fullName evidence="1">Undecaprenyl-PP-MurNAc-pentapeptide-UDPGlcNAc GlcNAc transferase</fullName>
    </alternativeName>
</protein>
<organism>
    <name type="scientific">Escherichia coli O17:K52:H18 (strain UMN026 / ExPEC)</name>
    <dbReference type="NCBI Taxonomy" id="585056"/>
    <lineage>
        <taxon>Bacteria</taxon>
        <taxon>Pseudomonadati</taxon>
        <taxon>Pseudomonadota</taxon>
        <taxon>Gammaproteobacteria</taxon>
        <taxon>Enterobacterales</taxon>
        <taxon>Enterobacteriaceae</taxon>
        <taxon>Escherichia</taxon>
    </lineage>
</organism>
<name>MURG_ECOLU</name>
<evidence type="ECO:0000255" key="1">
    <source>
        <dbReference type="HAMAP-Rule" id="MF_00033"/>
    </source>
</evidence>
<dbReference type="EC" id="2.4.1.227" evidence="1"/>
<dbReference type="EMBL" id="CU928163">
    <property type="protein sequence ID" value="CAR11313.1"/>
    <property type="molecule type" value="Genomic_DNA"/>
</dbReference>
<dbReference type="RefSeq" id="WP_000016559.1">
    <property type="nucleotide sequence ID" value="NC_011751.1"/>
</dbReference>
<dbReference type="RefSeq" id="YP_002410869.1">
    <property type="nucleotide sequence ID" value="NC_011751.1"/>
</dbReference>
<dbReference type="SMR" id="B7N7W3"/>
<dbReference type="STRING" id="585056.ECUMN_0090"/>
<dbReference type="CAZy" id="GT28">
    <property type="family name" value="Glycosyltransferase Family 28"/>
</dbReference>
<dbReference type="GeneID" id="93777344"/>
<dbReference type="KEGG" id="eum:ECUMN_0090"/>
<dbReference type="PATRIC" id="fig|585056.7.peg.281"/>
<dbReference type="HOGENOM" id="CLU_037404_2_0_6"/>
<dbReference type="UniPathway" id="UPA00219"/>
<dbReference type="Proteomes" id="UP000007097">
    <property type="component" value="Chromosome"/>
</dbReference>
<dbReference type="GO" id="GO:0005886">
    <property type="term" value="C:plasma membrane"/>
    <property type="evidence" value="ECO:0007669"/>
    <property type="project" value="UniProtKB-SubCell"/>
</dbReference>
<dbReference type="GO" id="GO:0051991">
    <property type="term" value="F:UDP-N-acetyl-D-glucosamine:N-acetylmuramoyl-L-alanyl-D-glutamyl-meso-2,6-diaminopimelyl-D-alanyl-D-alanine-diphosphoundecaprenol 4-beta-N-acetylglucosaminlytransferase activity"/>
    <property type="evidence" value="ECO:0007669"/>
    <property type="project" value="RHEA"/>
</dbReference>
<dbReference type="GO" id="GO:0050511">
    <property type="term" value="F:undecaprenyldiphospho-muramoylpentapeptide beta-N-acetylglucosaminyltransferase activity"/>
    <property type="evidence" value="ECO:0007669"/>
    <property type="project" value="UniProtKB-UniRule"/>
</dbReference>
<dbReference type="GO" id="GO:0005975">
    <property type="term" value="P:carbohydrate metabolic process"/>
    <property type="evidence" value="ECO:0007669"/>
    <property type="project" value="InterPro"/>
</dbReference>
<dbReference type="GO" id="GO:0051301">
    <property type="term" value="P:cell division"/>
    <property type="evidence" value="ECO:0007669"/>
    <property type="project" value="UniProtKB-KW"/>
</dbReference>
<dbReference type="GO" id="GO:0071555">
    <property type="term" value="P:cell wall organization"/>
    <property type="evidence" value="ECO:0007669"/>
    <property type="project" value="UniProtKB-KW"/>
</dbReference>
<dbReference type="GO" id="GO:0030259">
    <property type="term" value="P:lipid glycosylation"/>
    <property type="evidence" value="ECO:0007669"/>
    <property type="project" value="UniProtKB-UniRule"/>
</dbReference>
<dbReference type="GO" id="GO:0009252">
    <property type="term" value="P:peptidoglycan biosynthetic process"/>
    <property type="evidence" value="ECO:0007669"/>
    <property type="project" value="UniProtKB-UniRule"/>
</dbReference>
<dbReference type="GO" id="GO:0008360">
    <property type="term" value="P:regulation of cell shape"/>
    <property type="evidence" value="ECO:0007669"/>
    <property type="project" value="UniProtKB-KW"/>
</dbReference>
<dbReference type="CDD" id="cd03785">
    <property type="entry name" value="GT28_MurG"/>
    <property type="match status" value="1"/>
</dbReference>
<dbReference type="FunFam" id="3.40.50.2000:FF:000016">
    <property type="entry name" value="UDP-N-acetylglucosamine--N-acetylmuramyl-(pentapeptide) pyrophosphoryl-undecaprenol N-acetylglucosamine transferase"/>
    <property type="match status" value="1"/>
</dbReference>
<dbReference type="FunFam" id="3.40.50.2000:FF:000018">
    <property type="entry name" value="UDP-N-acetylglucosamine--N-acetylmuramyl-(pentapeptide) pyrophosphoryl-undecaprenol N-acetylglucosamine transferase"/>
    <property type="match status" value="1"/>
</dbReference>
<dbReference type="Gene3D" id="3.40.50.2000">
    <property type="entry name" value="Glycogen Phosphorylase B"/>
    <property type="match status" value="2"/>
</dbReference>
<dbReference type="HAMAP" id="MF_00033">
    <property type="entry name" value="MurG"/>
    <property type="match status" value="1"/>
</dbReference>
<dbReference type="InterPro" id="IPR006009">
    <property type="entry name" value="GlcNAc_MurG"/>
</dbReference>
<dbReference type="InterPro" id="IPR007235">
    <property type="entry name" value="Glyco_trans_28_C"/>
</dbReference>
<dbReference type="InterPro" id="IPR004276">
    <property type="entry name" value="GlycoTrans_28_N"/>
</dbReference>
<dbReference type="NCBIfam" id="TIGR01133">
    <property type="entry name" value="murG"/>
    <property type="match status" value="1"/>
</dbReference>
<dbReference type="PANTHER" id="PTHR21015:SF22">
    <property type="entry name" value="GLYCOSYLTRANSFERASE"/>
    <property type="match status" value="1"/>
</dbReference>
<dbReference type="PANTHER" id="PTHR21015">
    <property type="entry name" value="UDP-N-ACETYLGLUCOSAMINE--N-ACETYLMURAMYL-(PENTAPEPTIDE) PYROPHOSPHORYL-UNDECAPRENOL N-ACETYLGLUCOSAMINE TRANSFERASE 1"/>
    <property type="match status" value="1"/>
</dbReference>
<dbReference type="Pfam" id="PF04101">
    <property type="entry name" value="Glyco_tran_28_C"/>
    <property type="match status" value="1"/>
</dbReference>
<dbReference type="Pfam" id="PF03033">
    <property type="entry name" value="Glyco_transf_28"/>
    <property type="match status" value="1"/>
</dbReference>
<dbReference type="SUPFAM" id="SSF53756">
    <property type="entry name" value="UDP-Glycosyltransferase/glycogen phosphorylase"/>
    <property type="match status" value="1"/>
</dbReference>
<reference key="1">
    <citation type="journal article" date="2009" name="PLoS Genet.">
        <title>Organised genome dynamics in the Escherichia coli species results in highly diverse adaptive paths.</title>
        <authorList>
            <person name="Touchon M."/>
            <person name="Hoede C."/>
            <person name="Tenaillon O."/>
            <person name="Barbe V."/>
            <person name="Baeriswyl S."/>
            <person name="Bidet P."/>
            <person name="Bingen E."/>
            <person name="Bonacorsi S."/>
            <person name="Bouchier C."/>
            <person name="Bouvet O."/>
            <person name="Calteau A."/>
            <person name="Chiapello H."/>
            <person name="Clermont O."/>
            <person name="Cruveiller S."/>
            <person name="Danchin A."/>
            <person name="Diard M."/>
            <person name="Dossat C."/>
            <person name="Karoui M.E."/>
            <person name="Frapy E."/>
            <person name="Garry L."/>
            <person name="Ghigo J.M."/>
            <person name="Gilles A.M."/>
            <person name="Johnson J."/>
            <person name="Le Bouguenec C."/>
            <person name="Lescat M."/>
            <person name="Mangenot S."/>
            <person name="Martinez-Jehanne V."/>
            <person name="Matic I."/>
            <person name="Nassif X."/>
            <person name="Oztas S."/>
            <person name="Petit M.A."/>
            <person name="Pichon C."/>
            <person name="Rouy Z."/>
            <person name="Ruf C.S."/>
            <person name="Schneider D."/>
            <person name="Tourret J."/>
            <person name="Vacherie B."/>
            <person name="Vallenet D."/>
            <person name="Medigue C."/>
            <person name="Rocha E.P.C."/>
            <person name="Denamur E."/>
        </authorList>
    </citation>
    <scope>NUCLEOTIDE SEQUENCE [LARGE SCALE GENOMIC DNA]</scope>
    <source>
        <strain>UMN026 / ExPEC</strain>
    </source>
</reference>
<accession>B7N7W3</accession>
<proteinExistence type="inferred from homology"/>
<gene>
    <name evidence="1" type="primary">murG</name>
    <name type="ordered locus">ECUMN_0090</name>
</gene>
<keyword id="KW-0131">Cell cycle</keyword>
<keyword id="KW-0132">Cell division</keyword>
<keyword id="KW-0997">Cell inner membrane</keyword>
<keyword id="KW-1003">Cell membrane</keyword>
<keyword id="KW-0133">Cell shape</keyword>
<keyword id="KW-0961">Cell wall biogenesis/degradation</keyword>
<keyword id="KW-0328">Glycosyltransferase</keyword>
<keyword id="KW-0472">Membrane</keyword>
<keyword id="KW-0573">Peptidoglycan synthesis</keyword>
<keyword id="KW-0808">Transferase</keyword>
<sequence>MSGQGKRLMVMAGGTGGHVFPGLAVAHHLMAQGWQVRWLGTADRMEADLVPKHGIEIDFIRISGLRGKGIKALIAAPLRIFNAWRQARAIMKAYKPDVVLGMGGYVSGPGGLAAWSLGIPVVLHEQNGIAGLTNKWLAKIATKVMQAFPGAFPNAEVVGNPVRTDVLALPLPQQRLAGREGPVRVLVVGGSQGARILNQTMPQVAAKLGDSVTIWHQSGKGSQQSVEQAYAEAGQPQHKVTEFIDDMAAAYAWADVVVCRSGALTVSEIAAAGLPALFVPFQHKDRQQYWNALPLEKAGAAKIIEQPQLSVDAVANTLAGWSRETLLTMAERARAASIPDATERVANEVSRAARA</sequence>